<name>XYL3A_XYLR2</name>
<gene>
    <name evidence="9" type="primary">xyl3A</name>
    <name type="ordered locus">PRU_2730</name>
    <name type="ORF">02829</name>
</gene>
<feature type="signal peptide" evidence="4">
    <location>
        <begin position="1"/>
        <end position="19"/>
    </location>
</feature>
<feature type="chain" id="PRO_0000422406" description="Xylan 1,4-beta-xylosidase">
    <location>
        <begin position="20"/>
        <end position="861"/>
    </location>
</feature>
<feature type="domain" description="PA14" evidence="5">
    <location>
        <begin position="458"/>
        <end position="600"/>
    </location>
</feature>
<feature type="active site" description="Nucleophile" evidence="1">
    <location>
        <position position="269"/>
    </location>
</feature>
<feature type="active site" description="Proton donor/acceptor" evidence="1">
    <location>
        <position position="616"/>
    </location>
</feature>
<feature type="mutagenesis site" description="Abolishes xylosidase activity." evidence="6">
    <original>R</original>
    <variation>L</variation>
    <location>
        <position position="149"/>
    </location>
</feature>
<feature type="mutagenesis site" description="6-fold decrease in xylosidase activity." evidence="6">
    <original>Y</original>
    <variation>F</variation>
    <location>
        <position position="237"/>
    </location>
</feature>
<feature type="mutagenesis site" description="Abolishes xylosidase activity." evidence="6">
    <original>D</original>
    <variation>A</variation>
    <variation>N</variation>
    <location>
        <position position="269"/>
    </location>
</feature>
<feature type="mutagenesis site" description="No effect on xylosidase activity." evidence="6">
    <original>E</original>
    <variation>Q</variation>
    <location>
        <position position="594"/>
    </location>
</feature>
<feature type="mutagenesis site" description="Moderately reduces xylosidase activity." evidence="6">
    <original>E</original>
    <variation>A</variation>
    <location>
        <position position="616"/>
    </location>
</feature>
<sequence>MKYQLFLSLALCVGLGASAQTLPYQNPNLSAKERAVDLCSRLTLEEKAMLMLDESPAIPRLGIKKFFWWSEALHGAANMGNVTNFPEPVGMAASFNPHLLFKVFDIASTEFRAQYNHRMYDLNGEDMKMRSLSVWTPNVNIFRDPRWGRGQETYGEDPYLTSVMGVQVVKGLQGPEDARYRKLWACAKHYAVHSGPEYTRHTANLTDVSARDFWETYMPAFKTLVKDAKVREVMCAYQRLDDDPCCGSTRLLQQILRDEWGFEYLVVSDCGAVSDFYENHKSSSDAVHGTSKAVLAGTDVECGFNYAYKSLPEAVRKGLLSEKEVDKHVIRLLEGRFDLGEMDDPSLVEWSKIPYSAMSTKASANVALDMARQTIVLLQNKNNILPLKKNAEKIAIIGPNAHNEPMMWGNYNGTPNHTVTILDGVKAKQKKLVYIPGCDLTNDKVMECHLATDCVTPDGKKGLKGTFWNNTEMAGKPFTTEYYTKPVNVTTAGMHVFAPNLPIEDFSAKYETTFTAKEAGEYVVNVESTGHFELYVNGKQQFVNHIWRATPTRTVLKAEKGQKFDIEVRFQTVKTWGASMKIDVARELNIDYQETIAQLKGINKVIFCGGIAPSLEGEEMPVNIEGFKGGDRTSIELPKVQREFLKALKAAGKQVIYVNCSGSAIALQPETESCDAIVQAWYPGQEGGTAVADVLFGDYNPGGKLSVTFYKNDQQLPDYEDYSMKGRTYRYFDDALFPFGYGLSYTTFEVGEAKVEAATDGALYNVQIPVTNTGTKNGSETIQLYIRNLQDPDGPLKSLRGFERLDIKAGKTATANLKLTKESLEFWDAETNTMRTKPGKYEILYGTSSLDKDLKKLTITL</sequence>
<evidence type="ECO:0000250" key="1"/>
<evidence type="ECO:0000250" key="2">
    <source>
        <dbReference type="UniProtKB" id="P45702"/>
    </source>
</evidence>
<evidence type="ECO:0000250" key="3">
    <source>
        <dbReference type="UniProtKB" id="P96463"/>
    </source>
</evidence>
<evidence type="ECO:0000255" key="4"/>
<evidence type="ECO:0000255" key="5">
    <source>
        <dbReference type="PROSITE-ProRule" id="PRU01164"/>
    </source>
</evidence>
<evidence type="ECO:0000269" key="6">
    <source>
    </source>
</evidence>
<evidence type="ECO:0000269" key="7">
    <source>
    </source>
</evidence>
<evidence type="ECO:0000305" key="8"/>
<evidence type="ECO:0000312" key="9">
    <source>
        <dbReference type="EMBL" id="ACN78955.1"/>
    </source>
</evidence>
<evidence type="ECO:0000312" key="10">
    <source>
        <dbReference type="EMBL" id="ADE82109.1"/>
    </source>
</evidence>
<accession>D5EY15</accession>
<accession>C0LJN1</accession>
<dbReference type="EC" id="3.2.1.37" evidence="6"/>
<dbReference type="EC" id="3.2.1.55" evidence="6"/>
<dbReference type="EMBL" id="FJ713438">
    <property type="protein sequence ID" value="ACN78955.1"/>
    <property type="molecule type" value="Genomic_DNA"/>
</dbReference>
<dbReference type="EMBL" id="CP002006">
    <property type="protein sequence ID" value="ADE82109.1"/>
    <property type="molecule type" value="Genomic_DNA"/>
</dbReference>
<dbReference type="RefSeq" id="WP_013064096.1">
    <property type="nucleotide sequence ID" value="NC_014033.1"/>
</dbReference>
<dbReference type="SMR" id="D5EY15"/>
<dbReference type="STRING" id="264731.PRU_2730"/>
<dbReference type="CAZy" id="GH3">
    <property type="family name" value="Glycoside Hydrolase Family 3"/>
</dbReference>
<dbReference type="GeneID" id="31502261"/>
<dbReference type="KEGG" id="pru:PRU_2730"/>
<dbReference type="eggNOG" id="COG1472">
    <property type="taxonomic scope" value="Bacteria"/>
</dbReference>
<dbReference type="HOGENOM" id="CLU_004542_5_3_10"/>
<dbReference type="BRENDA" id="3.2.1.37">
    <property type="organism ID" value="768"/>
</dbReference>
<dbReference type="UniPathway" id="UPA00114"/>
<dbReference type="Proteomes" id="UP000000927">
    <property type="component" value="Chromosome"/>
</dbReference>
<dbReference type="GO" id="GO:0046556">
    <property type="term" value="F:alpha-L-arabinofuranosidase activity"/>
    <property type="evidence" value="ECO:0007669"/>
    <property type="project" value="UniProtKB-EC"/>
</dbReference>
<dbReference type="GO" id="GO:0009044">
    <property type="term" value="F:xylan 1,4-beta-xylosidase activity"/>
    <property type="evidence" value="ECO:0007669"/>
    <property type="project" value="UniProtKB-EC"/>
</dbReference>
<dbReference type="GO" id="GO:0031222">
    <property type="term" value="P:arabinan catabolic process"/>
    <property type="evidence" value="ECO:0007669"/>
    <property type="project" value="TreeGrafter"/>
</dbReference>
<dbReference type="GO" id="GO:0045493">
    <property type="term" value="P:xylan catabolic process"/>
    <property type="evidence" value="ECO:0007669"/>
    <property type="project" value="UniProtKB-UniPathway"/>
</dbReference>
<dbReference type="Gene3D" id="3.40.50.1700">
    <property type="entry name" value="Glycoside hydrolase family 3 C-terminal domain"/>
    <property type="match status" value="2"/>
</dbReference>
<dbReference type="Gene3D" id="3.20.20.300">
    <property type="entry name" value="Glycoside hydrolase, family 3, N-terminal domain"/>
    <property type="match status" value="1"/>
</dbReference>
<dbReference type="Gene3D" id="2.60.40.10">
    <property type="entry name" value="Immunoglobulins"/>
    <property type="match status" value="1"/>
</dbReference>
<dbReference type="InterPro" id="IPR044993">
    <property type="entry name" value="BXL"/>
</dbReference>
<dbReference type="InterPro" id="IPR026891">
    <property type="entry name" value="Fn3-like"/>
</dbReference>
<dbReference type="InterPro" id="IPR002772">
    <property type="entry name" value="Glyco_hydro_3_C"/>
</dbReference>
<dbReference type="InterPro" id="IPR036881">
    <property type="entry name" value="Glyco_hydro_3_C_sf"/>
</dbReference>
<dbReference type="InterPro" id="IPR001764">
    <property type="entry name" value="Glyco_hydro_3_N"/>
</dbReference>
<dbReference type="InterPro" id="IPR036962">
    <property type="entry name" value="Glyco_hydro_3_N_sf"/>
</dbReference>
<dbReference type="InterPro" id="IPR017853">
    <property type="entry name" value="Glycoside_hydrolase_SF"/>
</dbReference>
<dbReference type="InterPro" id="IPR013783">
    <property type="entry name" value="Ig-like_fold"/>
</dbReference>
<dbReference type="InterPro" id="IPR037524">
    <property type="entry name" value="PA14/GLEYA"/>
</dbReference>
<dbReference type="InterPro" id="IPR011658">
    <property type="entry name" value="PA14_dom"/>
</dbReference>
<dbReference type="InterPro" id="IPR054850">
    <property type="entry name" value="Xylosidase_Xyl3A"/>
</dbReference>
<dbReference type="NCBIfam" id="NF041776">
    <property type="entry name" value="xylosidase_Xyl3A"/>
    <property type="match status" value="1"/>
</dbReference>
<dbReference type="PANTHER" id="PTHR42721:SF3">
    <property type="entry name" value="BETA-D-XYLOSIDASE 5-RELATED"/>
    <property type="match status" value="1"/>
</dbReference>
<dbReference type="PANTHER" id="PTHR42721">
    <property type="entry name" value="SUGAR HYDROLASE-RELATED"/>
    <property type="match status" value="1"/>
</dbReference>
<dbReference type="Pfam" id="PF14310">
    <property type="entry name" value="Fn3-like"/>
    <property type="match status" value="1"/>
</dbReference>
<dbReference type="Pfam" id="PF00933">
    <property type="entry name" value="Glyco_hydro_3"/>
    <property type="match status" value="1"/>
</dbReference>
<dbReference type="Pfam" id="PF01915">
    <property type="entry name" value="Glyco_hydro_3_C"/>
    <property type="match status" value="1"/>
</dbReference>
<dbReference type="Pfam" id="PF07691">
    <property type="entry name" value="PA14"/>
    <property type="match status" value="1"/>
</dbReference>
<dbReference type="PRINTS" id="PR00133">
    <property type="entry name" value="GLHYDRLASE3"/>
</dbReference>
<dbReference type="SMART" id="SM01217">
    <property type="entry name" value="Fn3_like"/>
    <property type="match status" value="1"/>
</dbReference>
<dbReference type="SMART" id="SM00758">
    <property type="entry name" value="PA14"/>
    <property type="match status" value="1"/>
</dbReference>
<dbReference type="SUPFAM" id="SSF51445">
    <property type="entry name" value="(Trans)glycosidases"/>
    <property type="match status" value="1"/>
</dbReference>
<dbReference type="SUPFAM" id="SSF52279">
    <property type="entry name" value="Beta-D-glucan exohydrolase, C-terminal domain"/>
    <property type="match status" value="1"/>
</dbReference>
<dbReference type="PROSITE" id="PS51820">
    <property type="entry name" value="PA14"/>
    <property type="match status" value="1"/>
</dbReference>
<reference evidence="8 9" key="1">
    <citation type="journal article" date="2009" name="J. Bacteriol.">
        <title>Biochemical analysis of a beta-D-xylosidase and a bifunctional xylanase-ferulic acid esterase from a xylanolytic gene cluster in Prevotella ruminicola 23.</title>
        <authorList>
            <person name="Dodd D."/>
            <person name="Kocherginskaya S.A."/>
            <person name="Spies M.A."/>
            <person name="Beery K.E."/>
            <person name="Abbas C.A."/>
            <person name="Mackie R.I."/>
            <person name="Cann I.K."/>
        </authorList>
    </citation>
    <scope>NUCLEOTIDE SEQUENCE [GENOMIC DNA]</scope>
    <scope>FUNCTION</scope>
    <scope>CATALYTIC ACTIVITY</scope>
    <scope>BIOPHYSICOCHEMICAL PROPERTIES</scope>
    <scope>SUBSTRATE SPECIFICITY</scope>
    <scope>GENE NAME</scope>
    <scope>SUBUNIT</scope>
    <scope>MUTAGENESIS OF ARG-149; TYR-237; ASP-269; GLU-594 AND GLU-616</scope>
    <source>
        <strain evidence="6">ATCC 19189 / DSM 19721 / CIP 105475 / JCM 8958 / 23</strain>
    </source>
</reference>
<reference evidence="8 10" key="2">
    <citation type="journal article" date="2010" name="Microb. Ecol.">
        <title>Comparative genome analysis of Prevotella ruminicola and Prevotella bryantii: insights into their environmental niche.</title>
        <authorList>
            <person name="Purushe J."/>
            <person name="Fouts D.E."/>
            <person name="Morrison M."/>
            <person name="White B.A."/>
            <person name="Mackie R.I."/>
            <person name="Coutinho P.M."/>
            <person name="Henrissat B."/>
            <person name="Nelson K.E."/>
        </authorList>
    </citation>
    <scope>NUCLEOTIDE SEQUENCE [LARGE SCALE GENOMIC DNA]</scope>
    <source>
        <strain evidence="7">ATCC 19189 / DSM 19721 / CIP 105475 / JCM 8958 / 23</strain>
    </source>
</reference>
<protein>
    <recommendedName>
        <fullName evidence="2">Xylan 1,4-beta-xylosidase</fullName>
        <ecNumber evidence="6">3.2.1.37</ecNumber>
    </recommendedName>
    <alternativeName>
        <fullName evidence="2">1,4-beta-D-xylan xylohydrolase</fullName>
    </alternativeName>
    <alternativeName>
        <fullName evidence="3">Alpha-L-arabinofuranosidase</fullName>
        <shortName evidence="3">Arabinosidase</shortName>
        <ecNumber evidence="6">3.2.1.55</ecNumber>
    </alternativeName>
    <alternativeName>
        <fullName>Beta-D-xylosidase</fullName>
    </alternativeName>
    <alternativeName>
        <fullName>Exo-1,4-beta-xylosidase</fullName>
    </alternativeName>
</protein>
<keyword id="KW-0119">Carbohydrate metabolism</keyword>
<keyword id="KW-0378">Hydrolase</keyword>
<keyword id="KW-0624">Polysaccharide degradation</keyword>
<keyword id="KW-1185">Reference proteome</keyword>
<keyword id="KW-0732">Signal</keyword>
<keyword id="KW-0858">Xylan degradation</keyword>
<organism>
    <name type="scientific">Xylanibacter ruminicola (strain ATCC 19189 / DSM 19721 / CIP 105475 / JCM 8958 / 23)</name>
    <name type="common">Prevotella ruminicola</name>
    <dbReference type="NCBI Taxonomy" id="264731"/>
    <lineage>
        <taxon>Bacteria</taxon>
        <taxon>Pseudomonadati</taxon>
        <taxon>Bacteroidota</taxon>
        <taxon>Bacteroidia</taxon>
        <taxon>Bacteroidales</taxon>
        <taxon>Prevotellaceae</taxon>
        <taxon>Xylanibacter</taxon>
    </lineage>
</organism>
<comment type="function">
    <text evidence="6">Involved in degradation of plant cell wall polysaccharides. Has beta-xylosidase activity via its capacity to hydrolyze glycosidic linkages of beta-1,4-xylo-oligosaccharides of various lengths (X2 to X6), releasing xylose monomers. To a much lesser extent, also has alpha-L-arabinofuranosidase activity. Does not possess beta-D-glucosidase activity. Acts synergistically with Xyn10D-Fae1A to increase the release of xylose from xylan.</text>
</comment>
<comment type="catalytic activity">
    <reaction evidence="6">
        <text>Hydrolysis of (1-&gt;4)-beta-D-xylans, to remove successive D-xylose residues from the non-reducing termini.</text>
        <dbReference type="EC" id="3.2.1.37"/>
    </reaction>
</comment>
<comment type="catalytic activity">
    <reaction evidence="6">
        <text>Hydrolysis of terminal non-reducing alpha-L-arabinofuranoside residues in alpha-L-arabinosides.</text>
        <dbReference type="EC" id="3.2.1.55"/>
    </reaction>
</comment>
<comment type="biophysicochemical properties">
    <kinetics>
        <KM evidence="6">1.8 mM for pNP-beta-D-xylopyranoside (pNPX) (at 37 degrees Celsius and pH 5.0)</KM>
        <text>kcat is 9.7 sec(-1) for the beta-xylosidase activity with pNPX as substrate (at 37 degrees Celsius and pH 5.0).</text>
    </kinetics>
    <phDependence>
        <text evidence="6">Optimum pH is 5.0.</text>
    </phDependence>
</comment>
<comment type="pathway">
    <text evidence="6">Glycan degradation; xylan degradation.</text>
</comment>
<comment type="subunit">
    <text evidence="6">Exists as a large polymeric species, presumably as a homononamer.</text>
</comment>
<comment type="similarity">
    <text evidence="4">Belongs to the glycosyl hydrolase 3 family.</text>
</comment>
<proteinExistence type="evidence at protein level"/>